<accession>Q54PI9</accession>
<evidence type="ECO:0000250" key="1"/>
<evidence type="ECO:0000255" key="2"/>
<evidence type="ECO:0000255" key="3">
    <source>
        <dbReference type="PROSITE-ProRule" id="PRU00774"/>
    </source>
</evidence>
<evidence type="ECO:0000256" key="4">
    <source>
        <dbReference type="SAM" id="MobiDB-lite"/>
    </source>
</evidence>
<evidence type="ECO:0000269" key="5">
    <source>
    </source>
</evidence>
<evidence type="ECO:0000305" key="6"/>
<reference key="1">
    <citation type="journal article" date="2005" name="Nature">
        <title>The genome of the social amoeba Dictyostelium discoideum.</title>
        <authorList>
            <person name="Eichinger L."/>
            <person name="Pachebat J.A."/>
            <person name="Gloeckner G."/>
            <person name="Rajandream M.A."/>
            <person name="Sucgang R."/>
            <person name="Berriman M."/>
            <person name="Song J."/>
            <person name="Olsen R."/>
            <person name="Szafranski K."/>
            <person name="Xu Q."/>
            <person name="Tunggal B."/>
            <person name="Kummerfeld S."/>
            <person name="Madera M."/>
            <person name="Konfortov B.A."/>
            <person name="Rivero F."/>
            <person name="Bankier A.T."/>
            <person name="Lehmann R."/>
            <person name="Hamlin N."/>
            <person name="Davies R."/>
            <person name="Gaudet P."/>
            <person name="Fey P."/>
            <person name="Pilcher K."/>
            <person name="Chen G."/>
            <person name="Saunders D."/>
            <person name="Sodergren E.J."/>
            <person name="Davis P."/>
            <person name="Kerhornou A."/>
            <person name="Nie X."/>
            <person name="Hall N."/>
            <person name="Anjard C."/>
            <person name="Hemphill L."/>
            <person name="Bason N."/>
            <person name="Farbrother P."/>
            <person name="Desany B."/>
            <person name="Just E."/>
            <person name="Morio T."/>
            <person name="Rost R."/>
            <person name="Churcher C.M."/>
            <person name="Cooper J."/>
            <person name="Haydock S."/>
            <person name="van Driessche N."/>
            <person name="Cronin A."/>
            <person name="Goodhead I."/>
            <person name="Muzny D.M."/>
            <person name="Mourier T."/>
            <person name="Pain A."/>
            <person name="Lu M."/>
            <person name="Harper D."/>
            <person name="Lindsay R."/>
            <person name="Hauser H."/>
            <person name="James K.D."/>
            <person name="Quiles M."/>
            <person name="Madan Babu M."/>
            <person name="Saito T."/>
            <person name="Buchrieser C."/>
            <person name="Wardroper A."/>
            <person name="Felder M."/>
            <person name="Thangavelu M."/>
            <person name="Johnson D."/>
            <person name="Knights A."/>
            <person name="Loulseged H."/>
            <person name="Mungall K.L."/>
            <person name="Oliver K."/>
            <person name="Price C."/>
            <person name="Quail M.A."/>
            <person name="Urushihara H."/>
            <person name="Hernandez J."/>
            <person name="Rabbinowitsch E."/>
            <person name="Steffen D."/>
            <person name="Sanders M."/>
            <person name="Ma J."/>
            <person name="Kohara Y."/>
            <person name="Sharp S."/>
            <person name="Simmonds M.N."/>
            <person name="Spiegler S."/>
            <person name="Tivey A."/>
            <person name="Sugano S."/>
            <person name="White B."/>
            <person name="Walker D."/>
            <person name="Woodward J.R."/>
            <person name="Winckler T."/>
            <person name="Tanaka Y."/>
            <person name="Shaulsky G."/>
            <person name="Schleicher M."/>
            <person name="Weinstock G.M."/>
            <person name="Rosenthal A."/>
            <person name="Cox E.C."/>
            <person name="Chisholm R.L."/>
            <person name="Gibbs R.A."/>
            <person name="Loomis W.F."/>
            <person name="Platzer M."/>
            <person name="Kay R.R."/>
            <person name="Williams J.G."/>
            <person name="Dear P.H."/>
            <person name="Noegel A.A."/>
            <person name="Barrell B.G."/>
            <person name="Kuspa A."/>
        </authorList>
    </citation>
    <scope>NUCLEOTIDE SEQUENCE [LARGE SCALE GENOMIC DNA]</scope>
    <source>
        <strain>AX4</strain>
    </source>
</reference>
<reference key="2">
    <citation type="journal article" date="2004" name="Protoplasma">
        <title>Evolutionarily conserved modules in actin nucleation: lessons from Dictyostelium discoideum and plants. Review article.</title>
        <authorList>
            <person name="Cvrckova F."/>
            <person name="Rivero F."/>
            <person name="Bavlnka B."/>
        </authorList>
    </citation>
    <scope>NOMENCLATURE</scope>
</reference>
<reference key="3">
    <citation type="journal article" date="2005" name="BMC Genomics">
        <title>A comparative sequence analysis reveals a common GBD/FH3-FH1-FH2-DAD architecture in formins from Dictyostelium, fungi and metazoa.</title>
        <authorList>
            <person name="Rivero F."/>
            <person name="Muramoto T."/>
            <person name="Meyer A.-K."/>
            <person name="Urushihara H."/>
            <person name="Uyeda T.Q.P."/>
            <person name="Kitayama C."/>
        </authorList>
    </citation>
    <scope>DEVELOPMENTAL STAGE</scope>
</reference>
<reference key="4">
    <citation type="journal article" date="2006" name="Eur. J. Cell Biol.">
        <title>Rho GTPase signaling in Dictyostelium discoideum: insights from the genome.</title>
        <authorList>
            <person name="Vlahou G."/>
            <person name="Rivero F."/>
        </authorList>
    </citation>
    <scope>INTERACTION WITH RHO GTPASE</scope>
</reference>
<comment type="function">
    <text evidence="1">Formins play an important role in the nucleation of actin and the formation of linear actin filaments.</text>
</comment>
<comment type="developmental stage">
    <text evidence="5">Expression increases during transition to multi-cellular stages. During sexual development, displays a significant increase in fusion competent cells.</text>
</comment>
<comment type="similarity">
    <text evidence="6">Belongs to the formin homology family. Diaphanous subfamily.</text>
</comment>
<feature type="chain" id="PRO_0000363920" description="Formin-I">
    <location>
        <begin position="1"/>
        <end position="935"/>
    </location>
</feature>
<feature type="domain" description="FH1">
    <location>
        <begin position="444"/>
        <end position="505"/>
    </location>
</feature>
<feature type="domain" description="FH2" evidence="3">
    <location>
        <begin position="506"/>
        <end position="935"/>
    </location>
</feature>
<feature type="region of interest" description="Disordered" evidence="4">
    <location>
        <begin position="52"/>
        <end position="78"/>
    </location>
</feature>
<feature type="region of interest" description="Disordered" evidence="4">
    <location>
        <begin position="380"/>
        <end position="511"/>
    </location>
</feature>
<feature type="region of interest" description="Disordered" evidence="4">
    <location>
        <begin position="561"/>
        <end position="590"/>
    </location>
</feature>
<feature type="coiled-coil region" evidence="2">
    <location>
        <begin position="35"/>
        <end position="76"/>
    </location>
</feature>
<feature type="coiled-coil region" evidence="2">
    <location>
        <begin position="702"/>
        <end position="730"/>
    </location>
</feature>
<feature type="coiled-coil region" evidence="2">
    <location>
        <begin position="803"/>
        <end position="834"/>
    </location>
</feature>
<feature type="compositionally biased region" description="Low complexity" evidence="4">
    <location>
        <begin position="384"/>
        <end position="407"/>
    </location>
</feature>
<feature type="compositionally biased region" description="Polar residues" evidence="4">
    <location>
        <begin position="418"/>
        <end position="428"/>
    </location>
</feature>
<feature type="compositionally biased region" description="Basic and acidic residues" evidence="4">
    <location>
        <begin position="431"/>
        <end position="443"/>
    </location>
</feature>
<feature type="compositionally biased region" description="Polar residues" evidence="4">
    <location>
        <begin position="444"/>
        <end position="454"/>
    </location>
</feature>
<feature type="compositionally biased region" description="Pro residues" evidence="4">
    <location>
        <begin position="456"/>
        <end position="482"/>
    </location>
</feature>
<feature type="compositionally biased region" description="Polar residues" evidence="4">
    <location>
        <begin position="484"/>
        <end position="499"/>
    </location>
</feature>
<feature type="compositionally biased region" description="Low complexity" evidence="4">
    <location>
        <begin position="568"/>
        <end position="583"/>
    </location>
</feature>
<name>FORI_DICDI</name>
<protein>
    <recommendedName>
        <fullName>Formin-I</fullName>
    </recommendedName>
</protein>
<keyword id="KW-0009">Actin-binding</keyword>
<keyword id="KW-0175">Coiled coil</keyword>
<keyword id="KW-1185">Reference proteome</keyword>
<proteinExistence type="evidence at protein level"/>
<organism>
    <name type="scientific">Dictyostelium discoideum</name>
    <name type="common">Social amoeba</name>
    <dbReference type="NCBI Taxonomy" id="44689"/>
    <lineage>
        <taxon>Eukaryota</taxon>
        <taxon>Amoebozoa</taxon>
        <taxon>Evosea</taxon>
        <taxon>Eumycetozoa</taxon>
        <taxon>Dictyostelia</taxon>
        <taxon>Dictyosteliales</taxon>
        <taxon>Dictyosteliaceae</taxon>
        <taxon>Dictyostelium</taxon>
    </lineage>
</organism>
<dbReference type="EMBL" id="AAFI02000066">
    <property type="protein sequence ID" value="EAL65186.1"/>
    <property type="molecule type" value="Genomic_DNA"/>
</dbReference>
<dbReference type="RefSeq" id="XP_638543.1">
    <property type="nucleotide sequence ID" value="XM_633451.1"/>
</dbReference>
<dbReference type="SMR" id="Q54PI9"/>
<dbReference type="FunCoup" id="Q54PI9">
    <property type="interactions" value="744"/>
</dbReference>
<dbReference type="STRING" id="44689.Q54PI9"/>
<dbReference type="PaxDb" id="44689-DDB0231631"/>
<dbReference type="EnsemblProtists" id="EAL65186">
    <property type="protein sequence ID" value="EAL65186"/>
    <property type="gene ID" value="DDB_G0284519"/>
</dbReference>
<dbReference type="GeneID" id="8624636"/>
<dbReference type="KEGG" id="ddi:DDB_G0284519"/>
<dbReference type="dictyBase" id="DDB_G0284519">
    <property type="gene designation" value="forI"/>
</dbReference>
<dbReference type="VEuPathDB" id="AmoebaDB:DDB_G0284519"/>
<dbReference type="eggNOG" id="KOG1923">
    <property type="taxonomic scope" value="Eukaryota"/>
</dbReference>
<dbReference type="HOGENOM" id="CLU_313406_0_0_1"/>
<dbReference type="InParanoid" id="Q54PI9"/>
<dbReference type="OMA" id="ANNACIL"/>
<dbReference type="PRO" id="PR:Q54PI9"/>
<dbReference type="Proteomes" id="UP000002195">
    <property type="component" value="Chromosome 4"/>
</dbReference>
<dbReference type="GO" id="GO:0003779">
    <property type="term" value="F:actin binding"/>
    <property type="evidence" value="ECO:0007669"/>
    <property type="project" value="UniProtKB-KW"/>
</dbReference>
<dbReference type="GO" id="GO:0005522">
    <property type="term" value="F:profilin binding"/>
    <property type="evidence" value="ECO:0000250"/>
    <property type="project" value="dictyBase"/>
</dbReference>
<dbReference type="Gene3D" id="1.20.58.2220">
    <property type="entry name" value="Formin, FH2 domain"/>
    <property type="match status" value="1"/>
</dbReference>
<dbReference type="InterPro" id="IPR015425">
    <property type="entry name" value="FH2_Formin"/>
</dbReference>
<dbReference type="InterPro" id="IPR042201">
    <property type="entry name" value="FH2_Formin_sf"/>
</dbReference>
<dbReference type="InterPro" id="IPR051425">
    <property type="entry name" value="Formin_Homology"/>
</dbReference>
<dbReference type="PANTHER" id="PTHR45725:SF1">
    <property type="entry name" value="DISHEVELLED ASSOCIATED ACTIVATOR OF MORPHOGENESIS, ISOFORM D"/>
    <property type="match status" value="1"/>
</dbReference>
<dbReference type="PANTHER" id="PTHR45725">
    <property type="entry name" value="FORMIN HOMOLOGY 2 FAMILY MEMBER"/>
    <property type="match status" value="1"/>
</dbReference>
<dbReference type="Pfam" id="PF02181">
    <property type="entry name" value="FH2"/>
    <property type="match status" value="1"/>
</dbReference>
<dbReference type="SMART" id="SM00498">
    <property type="entry name" value="FH2"/>
    <property type="match status" value="1"/>
</dbReference>
<dbReference type="SUPFAM" id="SSF101447">
    <property type="entry name" value="Formin homology 2 domain (FH2 domain)"/>
    <property type="match status" value="1"/>
</dbReference>
<dbReference type="PROSITE" id="PS51444">
    <property type="entry name" value="FH2"/>
    <property type="match status" value="1"/>
</dbReference>
<sequence>MHDIDVAIQINMLFLPPTNELIRVDSNSKQLNQPQQQQQQQQQQINNENENSINNQENKENNNKDNNNNNNKEIKQSSEWGSKFSSLFSNMTKKKKSNFDLEMDAIKDAFLLNKPINNEEGLLIYSLDKSKKYIHSLSELDIGYVYLTEKETPIIRQNEDEVILANKVIIQANTMKRFSIKGILQSDVTTNALEIFTKRKMSQGVLFLEEDGSLCRIFYKIQDLITDTIYCNQDDTVMLQKLPNNEGIRFRFRGSFNREQVQQAMLAFSQPSDPQTWKRTIILREQQHHSSQSFTGDSVASRFLNKLSSKTKEDEESNDLKTKRENTVLKLKNRMKIDWDWKYTSTSVPIDQEPPTFIDNMVNRVREKISGSNNKLSDLLSSAKKQPQQQPQKDVTSSSSSSSNSSSPYLDSVDKLVITTNDSSSSNPLPDFDKLSLSSDDKVNNNNVQIENTTPSVPPPPPVGAPPPPPPPPPPPPPPPPSTLKLNRNRISTPKKPNNSGGGGGGGQLTPLQKKMRQLHWNAIPREKLKETFWDNLSPVKGNDNDQTLVESWFSLSPMAKEKMSKENLNNSNNNNNNNSNNNGEEQSLSDSGNTIVISKIIILDLRRSNNICILLSQFKLSYGAIKEAILCFEDGKLSVEQLIALDAMLPISEEEYQSLSSANYQSIEQLGNAERFLIEMMSIQHLQQRVQTYLFKLEVCSLLDSIEINNNQLSKAIEQLRNSRKFIKVLKVIFHIGSILNRGTYLNSTKGFKLDSLSKLSETKSKDQKHTVVDFIEIYIRENQPELLNFYSELDLLDKIPQSSLENILEESNEIENKFKQVDQEIQYHQQLLTNDNNNTLSSSSSSSYDQSKDTYLKVMSPFYDTFNTRFITIKQSTQQTLKQFQECCIYFGEDPQNITSKDFFSNIVKFSIAFKSSSNNAKKSLNLSTLNSK</sequence>
<gene>
    <name type="primary">forI</name>
    <name type="ORF">DDB_G0284519</name>
</gene>